<proteinExistence type="inferred from homology"/>
<keyword id="KW-0227">DNA damage</keyword>
<keyword id="KW-0234">DNA repair</keyword>
<keyword id="KW-0235">DNA replication</keyword>
<keyword id="KW-0436">Ligase</keyword>
<keyword id="KW-0460">Magnesium</keyword>
<keyword id="KW-0464">Manganese</keyword>
<keyword id="KW-0479">Metal-binding</keyword>
<keyword id="KW-0520">NAD</keyword>
<keyword id="KW-1185">Reference proteome</keyword>
<keyword id="KW-0862">Zinc</keyword>
<evidence type="ECO:0000255" key="1">
    <source>
        <dbReference type="HAMAP-Rule" id="MF_01588"/>
    </source>
</evidence>
<organism>
    <name type="scientific">Brucella anthropi (strain ATCC 49188 / DSM 6882 / CCUG 24695 / JCM 21032 / LMG 3331 / NBRC 15819 / NCTC 12168 / Alc 37)</name>
    <name type="common">Ochrobactrum anthropi</name>
    <dbReference type="NCBI Taxonomy" id="439375"/>
    <lineage>
        <taxon>Bacteria</taxon>
        <taxon>Pseudomonadati</taxon>
        <taxon>Pseudomonadota</taxon>
        <taxon>Alphaproteobacteria</taxon>
        <taxon>Hyphomicrobiales</taxon>
        <taxon>Brucellaceae</taxon>
        <taxon>Brucella/Ochrobactrum group</taxon>
        <taxon>Brucella</taxon>
    </lineage>
</organism>
<comment type="function">
    <text evidence="1">DNA ligase that catalyzes the formation of phosphodiester linkages between 5'-phosphoryl and 3'-hydroxyl groups in double-stranded DNA using NAD as a coenzyme and as the energy source for the reaction. It is essential for DNA replication and repair of damaged DNA.</text>
</comment>
<comment type="catalytic activity">
    <reaction evidence="1">
        <text>NAD(+) + (deoxyribonucleotide)n-3'-hydroxyl + 5'-phospho-(deoxyribonucleotide)m = (deoxyribonucleotide)n+m + AMP + beta-nicotinamide D-nucleotide.</text>
        <dbReference type="EC" id="6.5.1.2"/>
    </reaction>
</comment>
<comment type="cofactor">
    <cofactor evidence="1">
        <name>Mg(2+)</name>
        <dbReference type="ChEBI" id="CHEBI:18420"/>
    </cofactor>
    <cofactor evidence="1">
        <name>Mn(2+)</name>
        <dbReference type="ChEBI" id="CHEBI:29035"/>
    </cofactor>
</comment>
<comment type="similarity">
    <text evidence="1">Belongs to the NAD-dependent DNA ligase family. LigA subfamily.</text>
</comment>
<sequence length="721" mass="79288">MTDTPVEKLTEPEAVSELERLAREIAHHDELYHANDRPEISDAEYDALKRRNDAIEARFPHLVRTDSPSLRVGTAPVSKFAQVVHARPMLSLGNAFSDDDVRDFVGSVYRFLGPLPDNSIAFTAEPKIDGLSMSIRYENGILISGATRGDGTTGENVTTNIRTIAEIPNRLPAGAPSVVEVRGEVYMAKSDFLALNEQMAAEGKQTYVNPRNTAAGSLRQLDAKVTASRKLKFFAYAWGEMSDMPADTQMGMVEIFREWGFPVNPLTKRLHGADELLAHYRAIGLERAQLDYDIDGVVYKVDRLDLQTRLGFRSRSPRWAIAHKFPAEQATTILRGIDIQVGRTGALTPVARLEPITVGGVVVTNATLHNEDYIKGIGLKGERIRADEHDIRVGDTVIVQRAGDVIPQIVDVVLEKRKADATPFVFPHECPVCHSHAVREEGEAVYRCTGGLTCAAQAVERIRHFVSRNAFDIEGLGEKQVEFFFHAEDDKLKIKSPADIFTLQQRQAESPLKKLENIEGFGATSVKKLYDAINDRREIALHRFLFGLGIRHVGEVNAKRFARAYLSYAAFEEAALEAVPPKEGDRTDKGNEAWQELIAVEGIGSIVAEAVVDFYAEPHNREVLDNLFKAGVTPVDEVALVSTGSPVEGKTVVFTGSLERMSRDEAKAMAERYGAKTAGSVSKKTDLVVAGPGAGSKLAKASELGIEVIDEDAWFTLVGEE</sequence>
<accession>A6WZR6</accession>
<feature type="chain" id="PRO_0000313347" description="DNA ligase">
    <location>
        <begin position="1"/>
        <end position="721"/>
    </location>
</feature>
<feature type="domain" description="BRCT" evidence="1">
    <location>
        <begin position="642"/>
        <end position="721"/>
    </location>
</feature>
<feature type="active site" description="N6-AMP-lysine intermediate" evidence="1">
    <location>
        <position position="127"/>
    </location>
</feature>
<feature type="binding site" evidence="1">
    <location>
        <begin position="42"/>
        <end position="46"/>
    </location>
    <ligand>
        <name>NAD(+)</name>
        <dbReference type="ChEBI" id="CHEBI:57540"/>
    </ligand>
</feature>
<feature type="binding site" evidence="1">
    <location>
        <begin position="91"/>
        <end position="92"/>
    </location>
    <ligand>
        <name>NAD(+)</name>
        <dbReference type="ChEBI" id="CHEBI:57540"/>
    </ligand>
</feature>
<feature type="binding site" evidence="1">
    <location>
        <position position="125"/>
    </location>
    <ligand>
        <name>NAD(+)</name>
        <dbReference type="ChEBI" id="CHEBI:57540"/>
    </ligand>
</feature>
<feature type="binding site" evidence="1">
    <location>
        <position position="148"/>
    </location>
    <ligand>
        <name>NAD(+)</name>
        <dbReference type="ChEBI" id="CHEBI:57540"/>
    </ligand>
</feature>
<feature type="binding site" evidence="1">
    <location>
        <position position="184"/>
    </location>
    <ligand>
        <name>NAD(+)</name>
        <dbReference type="ChEBI" id="CHEBI:57540"/>
    </ligand>
</feature>
<feature type="binding site" evidence="1">
    <location>
        <position position="300"/>
    </location>
    <ligand>
        <name>NAD(+)</name>
        <dbReference type="ChEBI" id="CHEBI:57540"/>
    </ligand>
</feature>
<feature type="binding site" evidence="1">
    <location>
        <position position="324"/>
    </location>
    <ligand>
        <name>NAD(+)</name>
        <dbReference type="ChEBI" id="CHEBI:57540"/>
    </ligand>
</feature>
<feature type="binding site" evidence="1">
    <location>
        <position position="430"/>
    </location>
    <ligand>
        <name>Zn(2+)</name>
        <dbReference type="ChEBI" id="CHEBI:29105"/>
    </ligand>
</feature>
<feature type="binding site" evidence="1">
    <location>
        <position position="433"/>
    </location>
    <ligand>
        <name>Zn(2+)</name>
        <dbReference type="ChEBI" id="CHEBI:29105"/>
    </ligand>
</feature>
<feature type="binding site" evidence="1">
    <location>
        <position position="448"/>
    </location>
    <ligand>
        <name>Zn(2+)</name>
        <dbReference type="ChEBI" id="CHEBI:29105"/>
    </ligand>
</feature>
<feature type="binding site" evidence="1">
    <location>
        <position position="454"/>
    </location>
    <ligand>
        <name>Zn(2+)</name>
        <dbReference type="ChEBI" id="CHEBI:29105"/>
    </ligand>
</feature>
<protein>
    <recommendedName>
        <fullName evidence="1">DNA ligase</fullName>
        <ecNumber evidence="1">6.5.1.2</ecNumber>
    </recommendedName>
    <alternativeName>
        <fullName evidence="1">Polydeoxyribonucleotide synthase [NAD(+)]</fullName>
    </alternativeName>
</protein>
<gene>
    <name evidence="1" type="primary">ligA</name>
    <name type="ordered locus">Oant_1754</name>
</gene>
<name>DNLJ_BRUA4</name>
<dbReference type="EC" id="6.5.1.2" evidence="1"/>
<dbReference type="EMBL" id="CP000758">
    <property type="protein sequence ID" value="ABS14470.1"/>
    <property type="molecule type" value="Genomic_DNA"/>
</dbReference>
<dbReference type="RefSeq" id="WP_012091758.1">
    <property type="nucleotide sequence ID" value="NC_009667.1"/>
</dbReference>
<dbReference type="SMR" id="A6WZR6"/>
<dbReference type="STRING" id="439375.Oant_1754"/>
<dbReference type="KEGG" id="oan:Oant_1754"/>
<dbReference type="PATRIC" id="fig|439375.7.peg.1855"/>
<dbReference type="eggNOG" id="COG0272">
    <property type="taxonomic scope" value="Bacteria"/>
</dbReference>
<dbReference type="HOGENOM" id="CLU_007764_2_1_5"/>
<dbReference type="PhylomeDB" id="A6WZR6"/>
<dbReference type="Proteomes" id="UP000002301">
    <property type="component" value="Chromosome 1"/>
</dbReference>
<dbReference type="GO" id="GO:0005829">
    <property type="term" value="C:cytosol"/>
    <property type="evidence" value="ECO:0007669"/>
    <property type="project" value="TreeGrafter"/>
</dbReference>
<dbReference type="GO" id="GO:0003677">
    <property type="term" value="F:DNA binding"/>
    <property type="evidence" value="ECO:0007669"/>
    <property type="project" value="InterPro"/>
</dbReference>
<dbReference type="GO" id="GO:0003911">
    <property type="term" value="F:DNA ligase (NAD+) activity"/>
    <property type="evidence" value="ECO:0007669"/>
    <property type="project" value="UniProtKB-UniRule"/>
</dbReference>
<dbReference type="GO" id="GO:0046872">
    <property type="term" value="F:metal ion binding"/>
    <property type="evidence" value="ECO:0007669"/>
    <property type="project" value="UniProtKB-KW"/>
</dbReference>
<dbReference type="GO" id="GO:0006281">
    <property type="term" value="P:DNA repair"/>
    <property type="evidence" value="ECO:0007669"/>
    <property type="project" value="UniProtKB-KW"/>
</dbReference>
<dbReference type="GO" id="GO:0006260">
    <property type="term" value="P:DNA replication"/>
    <property type="evidence" value="ECO:0007669"/>
    <property type="project" value="UniProtKB-KW"/>
</dbReference>
<dbReference type="CDD" id="cd17748">
    <property type="entry name" value="BRCT_DNA_ligase_like"/>
    <property type="match status" value="1"/>
</dbReference>
<dbReference type="CDD" id="cd00114">
    <property type="entry name" value="LIGANc"/>
    <property type="match status" value="1"/>
</dbReference>
<dbReference type="FunFam" id="3.30.470.30:FF:000001">
    <property type="entry name" value="DNA ligase"/>
    <property type="match status" value="1"/>
</dbReference>
<dbReference type="Gene3D" id="6.20.10.30">
    <property type="match status" value="1"/>
</dbReference>
<dbReference type="Gene3D" id="1.10.150.20">
    <property type="entry name" value="5' to 3' exonuclease, C-terminal subdomain"/>
    <property type="match status" value="2"/>
</dbReference>
<dbReference type="Gene3D" id="3.40.50.10190">
    <property type="entry name" value="BRCT domain"/>
    <property type="match status" value="1"/>
</dbReference>
<dbReference type="Gene3D" id="3.30.470.30">
    <property type="entry name" value="DNA ligase/mRNA capping enzyme"/>
    <property type="match status" value="1"/>
</dbReference>
<dbReference type="Gene3D" id="1.10.287.610">
    <property type="entry name" value="Helix hairpin bin"/>
    <property type="match status" value="1"/>
</dbReference>
<dbReference type="Gene3D" id="2.40.50.140">
    <property type="entry name" value="Nucleic acid-binding proteins"/>
    <property type="match status" value="1"/>
</dbReference>
<dbReference type="HAMAP" id="MF_01588">
    <property type="entry name" value="DNA_ligase_A"/>
    <property type="match status" value="1"/>
</dbReference>
<dbReference type="InterPro" id="IPR001357">
    <property type="entry name" value="BRCT_dom"/>
</dbReference>
<dbReference type="InterPro" id="IPR036420">
    <property type="entry name" value="BRCT_dom_sf"/>
</dbReference>
<dbReference type="InterPro" id="IPR041663">
    <property type="entry name" value="DisA/LigA_HHH"/>
</dbReference>
<dbReference type="InterPro" id="IPR001679">
    <property type="entry name" value="DNA_ligase"/>
</dbReference>
<dbReference type="InterPro" id="IPR018239">
    <property type="entry name" value="DNA_ligase_AS"/>
</dbReference>
<dbReference type="InterPro" id="IPR033136">
    <property type="entry name" value="DNA_ligase_CS"/>
</dbReference>
<dbReference type="InterPro" id="IPR013839">
    <property type="entry name" value="DNAligase_adenylation"/>
</dbReference>
<dbReference type="InterPro" id="IPR013840">
    <property type="entry name" value="DNAligase_N"/>
</dbReference>
<dbReference type="InterPro" id="IPR003583">
    <property type="entry name" value="Hlx-hairpin-Hlx_DNA-bd_motif"/>
</dbReference>
<dbReference type="InterPro" id="IPR012340">
    <property type="entry name" value="NA-bd_OB-fold"/>
</dbReference>
<dbReference type="InterPro" id="IPR004150">
    <property type="entry name" value="NAD_DNA_ligase_OB"/>
</dbReference>
<dbReference type="InterPro" id="IPR010994">
    <property type="entry name" value="RuvA_2-like"/>
</dbReference>
<dbReference type="InterPro" id="IPR004149">
    <property type="entry name" value="Znf_DNAligase_C4"/>
</dbReference>
<dbReference type="NCBIfam" id="TIGR00575">
    <property type="entry name" value="dnlj"/>
    <property type="match status" value="1"/>
</dbReference>
<dbReference type="NCBIfam" id="NF005932">
    <property type="entry name" value="PRK07956.1"/>
    <property type="match status" value="1"/>
</dbReference>
<dbReference type="PANTHER" id="PTHR23389">
    <property type="entry name" value="CHROMOSOME TRANSMISSION FIDELITY FACTOR 18"/>
    <property type="match status" value="1"/>
</dbReference>
<dbReference type="PANTHER" id="PTHR23389:SF9">
    <property type="entry name" value="DNA LIGASE"/>
    <property type="match status" value="1"/>
</dbReference>
<dbReference type="Pfam" id="PF00533">
    <property type="entry name" value="BRCT"/>
    <property type="match status" value="1"/>
</dbReference>
<dbReference type="Pfam" id="PF01653">
    <property type="entry name" value="DNA_ligase_aden"/>
    <property type="match status" value="1"/>
</dbReference>
<dbReference type="Pfam" id="PF03120">
    <property type="entry name" value="DNA_ligase_OB"/>
    <property type="match status" value="1"/>
</dbReference>
<dbReference type="Pfam" id="PF03119">
    <property type="entry name" value="DNA_ligase_ZBD"/>
    <property type="match status" value="1"/>
</dbReference>
<dbReference type="Pfam" id="PF12826">
    <property type="entry name" value="HHH_2"/>
    <property type="match status" value="1"/>
</dbReference>
<dbReference type="PIRSF" id="PIRSF001604">
    <property type="entry name" value="LigA"/>
    <property type="match status" value="1"/>
</dbReference>
<dbReference type="SMART" id="SM00292">
    <property type="entry name" value="BRCT"/>
    <property type="match status" value="1"/>
</dbReference>
<dbReference type="SMART" id="SM00278">
    <property type="entry name" value="HhH1"/>
    <property type="match status" value="2"/>
</dbReference>
<dbReference type="SMART" id="SM00532">
    <property type="entry name" value="LIGANc"/>
    <property type="match status" value="1"/>
</dbReference>
<dbReference type="SUPFAM" id="SSF52113">
    <property type="entry name" value="BRCT domain"/>
    <property type="match status" value="1"/>
</dbReference>
<dbReference type="SUPFAM" id="SSF56091">
    <property type="entry name" value="DNA ligase/mRNA capping enzyme, catalytic domain"/>
    <property type="match status" value="1"/>
</dbReference>
<dbReference type="SUPFAM" id="SSF50249">
    <property type="entry name" value="Nucleic acid-binding proteins"/>
    <property type="match status" value="1"/>
</dbReference>
<dbReference type="SUPFAM" id="SSF47781">
    <property type="entry name" value="RuvA domain 2-like"/>
    <property type="match status" value="1"/>
</dbReference>
<dbReference type="PROSITE" id="PS50172">
    <property type="entry name" value="BRCT"/>
    <property type="match status" value="1"/>
</dbReference>
<dbReference type="PROSITE" id="PS01055">
    <property type="entry name" value="DNA_LIGASE_N1"/>
    <property type="match status" value="1"/>
</dbReference>
<dbReference type="PROSITE" id="PS01056">
    <property type="entry name" value="DNA_LIGASE_N2"/>
    <property type="match status" value="1"/>
</dbReference>
<reference key="1">
    <citation type="journal article" date="2011" name="J. Bacteriol.">
        <title>Genome of Ochrobactrum anthropi ATCC 49188 T, a versatile opportunistic pathogen and symbiont of several eukaryotic hosts.</title>
        <authorList>
            <person name="Chain P.S."/>
            <person name="Lang D.M."/>
            <person name="Comerci D.J."/>
            <person name="Malfatti S.A."/>
            <person name="Vergez L.M."/>
            <person name="Shin M."/>
            <person name="Ugalde R.A."/>
            <person name="Garcia E."/>
            <person name="Tolmasky M.E."/>
        </authorList>
    </citation>
    <scope>NUCLEOTIDE SEQUENCE [LARGE SCALE GENOMIC DNA]</scope>
    <source>
        <strain>ATCC 49188 / DSM 6882 / CCUG 24695 / JCM 21032 / LMG 3331 / NBRC 15819 / NCTC 12168 / Alc 37</strain>
    </source>
</reference>